<protein>
    <recommendedName>
        <fullName evidence="1">Protease HtpX</fullName>
        <ecNumber evidence="1">3.4.24.-</ecNumber>
    </recommendedName>
    <alternativeName>
        <fullName evidence="1">Heat shock protein HtpX</fullName>
    </alternativeName>
</protein>
<keyword id="KW-0997">Cell inner membrane</keyword>
<keyword id="KW-1003">Cell membrane</keyword>
<keyword id="KW-0378">Hydrolase</keyword>
<keyword id="KW-0472">Membrane</keyword>
<keyword id="KW-0479">Metal-binding</keyword>
<keyword id="KW-0482">Metalloprotease</keyword>
<keyword id="KW-0645">Protease</keyword>
<keyword id="KW-0812">Transmembrane</keyword>
<keyword id="KW-1133">Transmembrane helix</keyword>
<keyword id="KW-0862">Zinc</keyword>
<evidence type="ECO:0000255" key="1">
    <source>
        <dbReference type="HAMAP-Rule" id="MF_00188"/>
    </source>
</evidence>
<accession>Q7MLU5</accession>
<feature type="chain" id="PRO_0000138905" description="Protease HtpX">
    <location>
        <begin position="1"/>
        <end position="288"/>
    </location>
</feature>
<feature type="transmembrane region" description="Helical" evidence="1">
    <location>
        <begin position="4"/>
        <end position="24"/>
    </location>
</feature>
<feature type="transmembrane region" description="Helical" evidence="1">
    <location>
        <begin position="36"/>
        <end position="56"/>
    </location>
</feature>
<feature type="transmembrane region" description="Helical" evidence="1">
    <location>
        <begin position="151"/>
        <end position="171"/>
    </location>
</feature>
<feature type="transmembrane region" description="Helical" evidence="1">
    <location>
        <begin position="193"/>
        <end position="213"/>
    </location>
</feature>
<feature type="active site" evidence="1">
    <location>
        <position position="144"/>
    </location>
</feature>
<feature type="binding site" evidence="1">
    <location>
        <position position="143"/>
    </location>
    <ligand>
        <name>Zn(2+)</name>
        <dbReference type="ChEBI" id="CHEBI:29105"/>
        <note>catalytic</note>
    </ligand>
</feature>
<feature type="binding site" evidence="1">
    <location>
        <position position="147"/>
    </location>
    <ligand>
        <name>Zn(2+)</name>
        <dbReference type="ChEBI" id="CHEBI:29105"/>
        <note>catalytic</note>
    </ligand>
</feature>
<feature type="binding site" evidence="1">
    <location>
        <position position="222"/>
    </location>
    <ligand>
        <name>Zn(2+)</name>
        <dbReference type="ChEBI" id="CHEBI:29105"/>
        <note>catalytic</note>
    </ligand>
</feature>
<comment type="cofactor">
    <cofactor evidence="1">
        <name>Zn(2+)</name>
        <dbReference type="ChEBI" id="CHEBI:29105"/>
    </cofactor>
    <text evidence="1">Binds 1 zinc ion per subunit.</text>
</comment>
<comment type="subcellular location">
    <subcellularLocation>
        <location evidence="1">Cell inner membrane</location>
        <topology evidence="1">Multi-pass membrane protein</topology>
    </subcellularLocation>
</comment>
<comment type="similarity">
    <text evidence="1">Belongs to the peptidase M48B family.</text>
</comment>
<reference key="1">
    <citation type="journal article" date="2003" name="Genome Res.">
        <title>Comparative genome analysis of Vibrio vulnificus, a marine pathogen.</title>
        <authorList>
            <person name="Chen C.-Y."/>
            <person name="Wu K.-M."/>
            <person name="Chang Y.-C."/>
            <person name="Chang C.-H."/>
            <person name="Tsai H.-C."/>
            <person name="Liao T.-L."/>
            <person name="Liu Y.-M."/>
            <person name="Chen H.-J."/>
            <person name="Shen A.B.-T."/>
            <person name="Li J.-C."/>
            <person name="Su T.-L."/>
            <person name="Shao C.-P."/>
            <person name="Lee C.-T."/>
            <person name="Hor L.-I."/>
            <person name="Tsai S.-F."/>
        </authorList>
    </citation>
    <scope>NUCLEOTIDE SEQUENCE [LARGE SCALE GENOMIC DNA]</scope>
    <source>
        <strain>YJ016</strain>
    </source>
</reference>
<sequence>MKRVMLFLITNLAVVLVLSVVLNIVYAVTGMQPGSLSGLLVMAAVFGFGGAFISLMMSKGMALRSVGGMVIESPRNETEHWLLETVSRQAQQAGIGMPTVAIYDSPDINAFATGAKRDDSLVAVSTGLLHNMTRDEAEAVLAHEVSHIANGDMVTMTLMQGVVNTFVIFLSRFIANMVASNNSDEEGEGSNMMVYFAVSIALELVFGFLASFITMWYSRHREFHADAGAARLVGKEKMIAALERLKMSQESKLDGTMMAFGINGKQSLTELLMSHPPLDKRIAALRNF</sequence>
<organism>
    <name type="scientific">Vibrio vulnificus (strain YJ016)</name>
    <dbReference type="NCBI Taxonomy" id="196600"/>
    <lineage>
        <taxon>Bacteria</taxon>
        <taxon>Pseudomonadati</taxon>
        <taxon>Pseudomonadota</taxon>
        <taxon>Gammaproteobacteria</taxon>
        <taxon>Vibrionales</taxon>
        <taxon>Vibrionaceae</taxon>
        <taxon>Vibrio</taxon>
    </lineage>
</organism>
<proteinExistence type="inferred from homology"/>
<dbReference type="EC" id="3.4.24.-" evidence="1"/>
<dbReference type="EMBL" id="BA000037">
    <property type="protein sequence ID" value="BAC94096.1"/>
    <property type="molecule type" value="Genomic_DNA"/>
</dbReference>
<dbReference type="RefSeq" id="WP_011150005.1">
    <property type="nucleotide sequence ID" value="NC_005139.1"/>
</dbReference>
<dbReference type="SMR" id="Q7MLU5"/>
<dbReference type="STRING" id="672.VV93_v1c12460"/>
<dbReference type="MEROPS" id="M48.002"/>
<dbReference type="KEGG" id="vvy:VV1332"/>
<dbReference type="eggNOG" id="COG0501">
    <property type="taxonomic scope" value="Bacteria"/>
</dbReference>
<dbReference type="HOGENOM" id="CLU_042266_1_0_6"/>
<dbReference type="Proteomes" id="UP000002675">
    <property type="component" value="Chromosome I"/>
</dbReference>
<dbReference type="GO" id="GO:0005886">
    <property type="term" value="C:plasma membrane"/>
    <property type="evidence" value="ECO:0007669"/>
    <property type="project" value="UniProtKB-SubCell"/>
</dbReference>
<dbReference type="GO" id="GO:0004222">
    <property type="term" value="F:metalloendopeptidase activity"/>
    <property type="evidence" value="ECO:0007669"/>
    <property type="project" value="UniProtKB-UniRule"/>
</dbReference>
<dbReference type="GO" id="GO:0008270">
    <property type="term" value="F:zinc ion binding"/>
    <property type="evidence" value="ECO:0007669"/>
    <property type="project" value="UniProtKB-UniRule"/>
</dbReference>
<dbReference type="GO" id="GO:0006508">
    <property type="term" value="P:proteolysis"/>
    <property type="evidence" value="ECO:0007669"/>
    <property type="project" value="UniProtKB-KW"/>
</dbReference>
<dbReference type="CDD" id="cd07335">
    <property type="entry name" value="M48B_HtpX_like"/>
    <property type="match status" value="1"/>
</dbReference>
<dbReference type="FunFam" id="3.30.2010.10:FF:000001">
    <property type="entry name" value="Protease HtpX"/>
    <property type="match status" value="1"/>
</dbReference>
<dbReference type="Gene3D" id="3.30.2010.10">
    <property type="entry name" value="Metalloproteases ('zincins'), catalytic domain"/>
    <property type="match status" value="1"/>
</dbReference>
<dbReference type="HAMAP" id="MF_00188">
    <property type="entry name" value="Pept_M48_protease_HtpX"/>
    <property type="match status" value="1"/>
</dbReference>
<dbReference type="InterPro" id="IPR050083">
    <property type="entry name" value="HtpX_protease"/>
</dbReference>
<dbReference type="InterPro" id="IPR022919">
    <property type="entry name" value="Pept_M48_protease_HtpX"/>
</dbReference>
<dbReference type="InterPro" id="IPR001915">
    <property type="entry name" value="Peptidase_M48"/>
</dbReference>
<dbReference type="NCBIfam" id="NF003965">
    <property type="entry name" value="PRK05457.1"/>
    <property type="match status" value="1"/>
</dbReference>
<dbReference type="PANTHER" id="PTHR43221">
    <property type="entry name" value="PROTEASE HTPX"/>
    <property type="match status" value="1"/>
</dbReference>
<dbReference type="PANTHER" id="PTHR43221:SF1">
    <property type="entry name" value="PROTEASE HTPX"/>
    <property type="match status" value="1"/>
</dbReference>
<dbReference type="Pfam" id="PF01435">
    <property type="entry name" value="Peptidase_M48"/>
    <property type="match status" value="1"/>
</dbReference>
<name>HTPX_VIBVY</name>
<gene>
    <name evidence="1" type="primary">htpX</name>
    <name type="ordered locus">VV1332</name>
</gene>